<organism>
    <name type="scientific">Pyrococcus abyssi (strain GE5 / Orsay)</name>
    <dbReference type="NCBI Taxonomy" id="272844"/>
    <lineage>
        <taxon>Archaea</taxon>
        <taxon>Methanobacteriati</taxon>
        <taxon>Methanobacteriota</taxon>
        <taxon>Thermococci</taxon>
        <taxon>Thermococcales</taxon>
        <taxon>Thermococcaceae</taxon>
        <taxon>Pyrococcus</taxon>
    </lineage>
</organism>
<feature type="chain" id="PRO_0000014487" description="Probable translation initiation factor IF-2, 1st part" evidence="2">
    <location>
        <begin position="1"/>
        <end position="20"/>
    </location>
</feature>
<feature type="chain" id="PRO_0000014488" description="Pab infB intein" evidence="2">
    <location>
        <begin position="21"/>
        <end position="414"/>
    </location>
</feature>
<feature type="chain" id="PRO_0000014489" description="Probable translation initiation factor IF-2, 2nd part" evidence="2">
    <location>
        <begin position="415"/>
        <end position="992"/>
    </location>
</feature>
<feature type="domain" description="DOD-type homing endonuclease">
    <location>
        <begin position="96"/>
        <end position="220"/>
    </location>
</feature>
<feature type="domain" description="tr-type G">
    <location>
        <begin position="399"/>
        <end position="616"/>
    </location>
</feature>
<feature type="binding site" evidence="1">
    <location>
        <begin position="472"/>
        <end position="476"/>
    </location>
    <ligand>
        <name>GTP</name>
        <dbReference type="ChEBI" id="CHEBI:37565"/>
    </ligand>
</feature>
<feature type="binding site" evidence="1">
    <location>
        <begin position="526"/>
        <end position="529"/>
    </location>
    <ligand>
        <name>GTP</name>
        <dbReference type="ChEBI" id="CHEBI:37565"/>
    </ligand>
</feature>
<feature type="helix" evidence="4">
    <location>
        <begin position="414"/>
        <end position="422"/>
    </location>
</feature>
<feature type="helix" evidence="4">
    <location>
        <begin position="426"/>
        <end position="429"/>
    </location>
</feature>
<feature type="helix" evidence="4">
    <location>
        <begin position="431"/>
        <end position="433"/>
    </location>
</feature>
<feature type="strand" evidence="4">
    <location>
        <begin position="439"/>
        <end position="444"/>
    </location>
</feature>
<feature type="helix" evidence="4">
    <location>
        <begin position="445"/>
        <end position="452"/>
    </location>
</feature>
<feature type="helix" evidence="4">
    <location>
        <begin position="453"/>
        <end position="458"/>
    </location>
</feature>
<feature type="strand" evidence="4">
    <location>
        <begin position="459"/>
        <end position="461"/>
    </location>
</feature>
<feature type="strand" evidence="4">
    <location>
        <begin position="467"/>
        <end position="472"/>
    </location>
</feature>
<feature type="helix" evidence="4">
    <location>
        <begin position="477"/>
        <end position="479"/>
    </location>
</feature>
<feature type="helix" evidence="4">
    <location>
        <begin position="480"/>
        <end position="489"/>
    </location>
</feature>
<feature type="strand" evidence="4">
    <location>
        <begin position="491"/>
        <end position="498"/>
    </location>
</feature>
<feature type="turn" evidence="4">
    <location>
        <begin position="499"/>
        <end position="501"/>
    </location>
</feature>
<feature type="helix" evidence="4">
    <location>
        <begin position="505"/>
        <end position="517"/>
    </location>
</feature>
<feature type="strand" evidence="4">
    <location>
        <begin position="521"/>
        <end position="526"/>
    </location>
</feature>
<feature type="helix" evidence="4">
    <location>
        <begin position="528"/>
        <end position="530"/>
    </location>
</feature>
<feature type="strand" evidence="5">
    <location>
        <begin position="531"/>
        <end position="533"/>
    </location>
</feature>
<feature type="helix" evidence="4">
    <location>
        <begin position="542"/>
        <end position="545"/>
    </location>
</feature>
<feature type="helix" evidence="4">
    <location>
        <begin position="546"/>
        <end position="548"/>
    </location>
</feature>
<feature type="helix" evidence="4">
    <location>
        <begin position="551"/>
        <end position="570"/>
    </location>
</feature>
<feature type="strand" evidence="4">
    <location>
        <begin position="574"/>
        <end position="577"/>
    </location>
</feature>
<feature type="helix" evidence="4">
    <location>
        <begin position="578"/>
        <end position="580"/>
    </location>
</feature>
<feature type="turn" evidence="4">
    <location>
        <begin position="584"/>
        <end position="586"/>
    </location>
</feature>
<feature type="strand" evidence="4">
    <location>
        <begin position="587"/>
        <end position="592"/>
    </location>
</feature>
<feature type="turn" evidence="4">
    <location>
        <begin position="595"/>
        <end position="598"/>
    </location>
</feature>
<feature type="helix" evidence="4">
    <location>
        <begin position="601"/>
        <end position="619"/>
    </location>
</feature>
<feature type="strand" evidence="5">
    <location>
        <begin position="624"/>
        <end position="626"/>
    </location>
</feature>
<feature type="strand" evidence="4">
    <location>
        <begin position="629"/>
        <end position="638"/>
    </location>
</feature>
<feature type="turn" evidence="4">
    <location>
        <begin position="639"/>
        <end position="641"/>
    </location>
</feature>
<feature type="strand" evidence="4">
    <location>
        <begin position="642"/>
        <end position="655"/>
    </location>
</feature>
<feature type="strand" evidence="4">
    <location>
        <begin position="659"/>
        <end position="662"/>
    </location>
</feature>
<feature type="strand" evidence="4">
    <location>
        <begin position="664"/>
        <end position="667"/>
    </location>
</feature>
<feature type="strand" evidence="4">
    <location>
        <begin position="669"/>
        <end position="672"/>
    </location>
</feature>
<feature type="strand" evidence="4">
    <location>
        <begin position="675"/>
        <end position="678"/>
    </location>
</feature>
<feature type="strand" evidence="4">
    <location>
        <begin position="693"/>
        <end position="707"/>
    </location>
</feature>
<feature type="helix" evidence="4">
    <location>
        <begin position="711"/>
        <end position="713"/>
    </location>
</feature>
<feature type="strand" evidence="4">
    <location>
        <begin position="718"/>
        <end position="722"/>
    </location>
</feature>
<feature type="helix" evidence="4">
    <location>
        <begin position="726"/>
        <end position="742"/>
    </location>
</feature>
<feature type="strand" evidence="4">
    <location>
        <begin position="749"/>
        <end position="758"/>
    </location>
</feature>
<feature type="helix" evidence="4">
    <location>
        <begin position="759"/>
        <end position="771"/>
    </location>
</feature>
<feature type="strand" evidence="4">
    <location>
        <begin position="776"/>
        <end position="784"/>
    </location>
</feature>
<feature type="helix" evidence="4">
    <location>
        <begin position="786"/>
        <end position="798"/>
    </location>
</feature>
<feature type="helix" evidence="4">
    <location>
        <begin position="800"/>
        <end position="802"/>
    </location>
</feature>
<feature type="strand" evidence="4">
    <location>
        <begin position="804"/>
        <end position="809"/>
    </location>
</feature>
<feature type="helix" evidence="4">
    <location>
        <begin position="814"/>
        <end position="823"/>
    </location>
</feature>
<feature type="strand" evidence="4">
    <location>
        <begin position="826"/>
        <end position="832"/>
    </location>
</feature>
<feature type="helix" evidence="4">
    <location>
        <begin position="833"/>
        <end position="848"/>
    </location>
</feature>
<feature type="helix" evidence="5">
    <location>
        <begin position="855"/>
        <end position="858"/>
    </location>
</feature>
<feature type="strand" evidence="5">
    <location>
        <begin position="863"/>
        <end position="867"/>
    </location>
</feature>
<feature type="strand" evidence="5">
    <location>
        <begin position="874"/>
        <end position="876"/>
    </location>
</feature>
<feature type="strand" evidence="5">
    <location>
        <begin position="878"/>
        <end position="890"/>
    </location>
</feature>
<feature type="strand" evidence="5">
    <location>
        <begin position="897"/>
        <end position="899"/>
    </location>
</feature>
<feature type="strand" evidence="5">
    <location>
        <begin position="905"/>
        <end position="917"/>
    </location>
</feature>
<feature type="strand" evidence="5">
    <location>
        <begin position="927"/>
        <end position="934"/>
    </location>
</feature>
<feature type="turn" evidence="5">
    <location>
        <begin position="938"/>
        <end position="940"/>
    </location>
</feature>
<feature type="strand" evidence="5">
    <location>
        <begin position="946"/>
        <end position="949"/>
    </location>
</feature>
<feature type="helix" evidence="5">
    <location>
        <begin position="953"/>
        <end position="961"/>
    </location>
</feature>
<feature type="helix" evidence="5">
    <location>
        <begin position="969"/>
        <end position="982"/>
    </location>
</feature>
<feature type="helix" evidence="5">
    <location>
        <begin position="987"/>
        <end position="991"/>
    </location>
</feature>
<protein>
    <recommendedName>
        <fullName>Probable translation initiation factor IF-2</fullName>
    </recommendedName>
    <component>
        <recommendedName>
            <fullName>Pab infB intein</fullName>
        </recommendedName>
        <alternativeName>
            <fullName>Pab IF2 intein</fullName>
        </alternativeName>
    </component>
</protein>
<evidence type="ECO:0000250" key="1"/>
<evidence type="ECO:0000255" key="2"/>
<evidence type="ECO:0000305" key="3"/>
<evidence type="ECO:0007829" key="4">
    <source>
        <dbReference type="PDB" id="7YZN"/>
    </source>
</evidence>
<evidence type="ECO:0007829" key="5">
    <source>
        <dbReference type="PDB" id="7ZAH"/>
    </source>
</evidence>
<name>IF2P_PYRAB</name>
<sequence>MTKRIRQPIIAVLGHVDHGKCLLPDEKVVVPSVGFVTLKELFETASKVVERDDEKEIRELDERITSVNGDGKTGLVKASYVWKVRHKGKVIRVKLKNWHGVTVTPEHPFLTTKGWKRADQLRPGDYVAVPRFIHGNEDEKIFLSYVKVKKSGEEWKEYFYLAGRKGNIDVNLLFVAPKRYVVEFLRGYFEERSEVKGESVIVEARELVEPLSLALLRFGIFSKIQGSKLIVTGKRNLEAFKDYIGFKDEREKALEEAIEKVKGSEVYPIFEEIRRLRLLFGFTREELGSYAKYENSEAPTYEELMEILDFIERGSPSLSKKIAILEGKLKAELRVLEEEGLIKDGKLTPLGRELLEVWRNREFDSKDVDYIRNIAETLVFIPVENVEEEEYDGYVYDLTTETHNFIANGILVHNTTLLDRIRKTNVAAKEAGGITQHIGATEVPIEVVKKIAGPLIKLWKAEIKLPGLLFIDTPGHEAFTSLRARGGSLADLAVLVVDINEGFQPQTIESIEILRKYRTPFVVAANKIDRIKGWVIEEDEPFLMNIKKQDQRAVQELETKLWELIGKFYEFGFQANRFDRVQNFTRELAIVPISAKYGIGIAELLVLIAGLSQRYLEEKLKIEVEGPARGTILEVREEPGLGHTIDVIIYDGTLHKDDTIVVGGKDKAIVTKIRALLKPKPLDEIRDPRFRFDYVDEVTAAAGVKIAAPGLEEALAGSPVIAAPTPEDVEKAKQEILEQIERVVISTDKVGVIVKADTLGSLEALSKELQEKEIPIRKADVGNVSKTDVMEALSVKEEEPKYGVILGFNVKVNEDAEEVAKAKDVKIFVGNVIYKLIEDYEEWVKEEEEKKKRELLSKVTFPGVIRLYPDERYVFRRSNPAIVGIEVIEGRIKPGVTLIKQNGQKVGVIRSIKSRDEFLQEAKKGQAVAIAIEGAIVGRHIHPGETLYVDLSRDDAITLLKHLRDTLEDTDIKALKMIAKVKAKEDPFWRAI</sequence>
<comment type="function">
    <text evidence="1">Function in general translation initiation by promoting the binding of the formylmethionine-tRNA to ribosomes. Seems to function along with eIF-2 (By similarity).</text>
</comment>
<comment type="PTM">
    <text evidence="3">This protein undergoes a protein self splicing that involves a post-translational excision of the intervening region (intein) followed by peptide ligation.</text>
</comment>
<comment type="miscellaneous">
    <text>The intein interrupts the GTP-binding site.</text>
</comment>
<comment type="similarity">
    <text evidence="3">Belongs to the TRAFAC class translation factor GTPase superfamily. Classic translation factor GTPase family. IF-2 subfamily.</text>
</comment>
<dbReference type="EMBL" id="AJ248286">
    <property type="protein sequence ID" value="CAB50050.1"/>
    <property type="molecule type" value="Genomic_DNA"/>
</dbReference>
<dbReference type="EMBL" id="HE613800">
    <property type="protein sequence ID" value="CCE70554.1"/>
    <property type="molecule type" value="Genomic_DNA"/>
</dbReference>
<dbReference type="PIR" id="E75093">
    <property type="entry name" value="E75093"/>
</dbReference>
<dbReference type="RefSeq" id="WP_010868256.1">
    <property type="nucleotide sequence ID" value="NC_000868.1"/>
</dbReference>
<dbReference type="PDB" id="7YYP">
    <property type="method" value="X-ray"/>
    <property type="resolution" value="2.90 A"/>
    <property type="chains" value="A=414-992"/>
</dbReference>
<dbReference type="PDB" id="7YZN">
    <property type="method" value="X-ray"/>
    <property type="resolution" value="1.70 A"/>
    <property type="chains" value="A=414-852"/>
</dbReference>
<dbReference type="PDB" id="7ZAG">
    <property type="method" value="EM"/>
    <property type="resolution" value="2.77 A"/>
    <property type="chains" value="7=414-992"/>
</dbReference>
<dbReference type="PDB" id="7ZAH">
    <property type="method" value="EM"/>
    <property type="resolution" value="2.70 A"/>
    <property type="chains" value="7=414-992"/>
</dbReference>
<dbReference type="PDB" id="7ZKI">
    <property type="method" value="EM"/>
    <property type="resolution" value="3.60 A"/>
    <property type="chains" value="7=418-992"/>
</dbReference>
<dbReference type="PDBsum" id="7YYP"/>
<dbReference type="PDBsum" id="7YZN"/>
<dbReference type="PDBsum" id="7ZAG"/>
<dbReference type="PDBsum" id="7ZAH"/>
<dbReference type="PDBsum" id="7ZKI"/>
<dbReference type="EMDB" id="EMD-14579"/>
<dbReference type="EMDB" id="EMD-14580"/>
<dbReference type="EMDB" id="EMD-14763"/>
<dbReference type="SMR" id="Q9UZK7"/>
<dbReference type="STRING" id="272844.PAB0755"/>
<dbReference type="MEROPS" id="N10.004"/>
<dbReference type="KEGG" id="pab:PAB0755"/>
<dbReference type="PATRIC" id="fig|272844.11.peg.1195"/>
<dbReference type="eggNOG" id="arCOG01560">
    <property type="taxonomic scope" value="Archaea"/>
</dbReference>
<dbReference type="eggNOG" id="arCOG03151">
    <property type="taxonomic scope" value="Archaea"/>
</dbReference>
<dbReference type="HOGENOM" id="CLU_002656_3_4_2"/>
<dbReference type="OrthoDB" id="30957at2157"/>
<dbReference type="PhylomeDB" id="Q9UZK7"/>
<dbReference type="Proteomes" id="UP000000810">
    <property type="component" value="Chromosome"/>
</dbReference>
<dbReference type="Proteomes" id="UP000009139">
    <property type="component" value="Chromosome"/>
</dbReference>
<dbReference type="GO" id="GO:0005737">
    <property type="term" value="C:cytoplasm"/>
    <property type="evidence" value="ECO:0007669"/>
    <property type="project" value="TreeGrafter"/>
</dbReference>
<dbReference type="GO" id="GO:0004519">
    <property type="term" value="F:endonuclease activity"/>
    <property type="evidence" value="ECO:0007669"/>
    <property type="project" value="UniProtKB-KW"/>
</dbReference>
<dbReference type="GO" id="GO:0005525">
    <property type="term" value="F:GTP binding"/>
    <property type="evidence" value="ECO:0007669"/>
    <property type="project" value="UniProtKB-KW"/>
</dbReference>
<dbReference type="GO" id="GO:0003924">
    <property type="term" value="F:GTPase activity"/>
    <property type="evidence" value="ECO:0007669"/>
    <property type="project" value="UniProtKB-UniRule"/>
</dbReference>
<dbReference type="GO" id="GO:0003743">
    <property type="term" value="F:translation initiation factor activity"/>
    <property type="evidence" value="ECO:0007669"/>
    <property type="project" value="UniProtKB-UniRule"/>
</dbReference>
<dbReference type="GO" id="GO:0016539">
    <property type="term" value="P:intein-mediated protein splicing"/>
    <property type="evidence" value="ECO:0007669"/>
    <property type="project" value="InterPro"/>
</dbReference>
<dbReference type="GO" id="GO:0006314">
    <property type="term" value="P:intron homing"/>
    <property type="evidence" value="ECO:0007669"/>
    <property type="project" value="UniProtKB-KW"/>
</dbReference>
<dbReference type="CDD" id="cd03703">
    <property type="entry name" value="aeIF5B_II"/>
    <property type="match status" value="1"/>
</dbReference>
<dbReference type="CDD" id="cd00081">
    <property type="entry name" value="Hint"/>
    <property type="match status" value="2"/>
</dbReference>
<dbReference type="CDD" id="cd16266">
    <property type="entry name" value="IF2_aeIF5B_IV"/>
    <property type="match status" value="1"/>
</dbReference>
<dbReference type="CDD" id="cd01887">
    <property type="entry name" value="IF2_eIF5B"/>
    <property type="match status" value="1"/>
</dbReference>
<dbReference type="FunFam" id="3.40.50.300:FF:000112">
    <property type="entry name" value="Eukaryotic translation initiation factor 5B"/>
    <property type="match status" value="1"/>
</dbReference>
<dbReference type="FunFam" id="2.40.30.10:FF:000013">
    <property type="entry name" value="eukaryotic translation initiation factor 5B"/>
    <property type="match status" value="1"/>
</dbReference>
<dbReference type="FunFam" id="3.40.50.10050:FF:000009">
    <property type="entry name" value="Probable translation initiation factor IF-2"/>
    <property type="match status" value="1"/>
</dbReference>
<dbReference type="Gene3D" id="2.170.16.10">
    <property type="entry name" value="Hedgehog/Intein (Hint) domain"/>
    <property type="match status" value="2"/>
</dbReference>
<dbReference type="Gene3D" id="3.10.28.10">
    <property type="entry name" value="Homing endonucleases"/>
    <property type="match status" value="1"/>
</dbReference>
<dbReference type="Gene3D" id="3.40.50.300">
    <property type="entry name" value="P-loop containing nucleotide triphosphate hydrolases"/>
    <property type="match status" value="1"/>
</dbReference>
<dbReference type="Gene3D" id="2.40.30.10">
    <property type="entry name" value="Translation factors"/>
    <property type="match status" value="2"/>
</dbReference>
<dbReference type="Gene3D" id="3.40.50.10050">
    <property type="entry name" value="Translation initiation factor IF- 2, domain 3"/>
    <property type="match status" value="1"/>
</dbReference>
<dbReference type="HAMAP" id="MF_00100_A">
    <property type="entry name" value="IF_2_A"/>
    <property type="match status" value="1"/>
</dbReference>
<dbReference type="InterPro" id="IPR004161">
    <property type="entry name" value="EFTu-like_2"/>
</dbReference>
<dbReference type="InterPro" id="IPR029459">
    <property type="entry name" value="EFTU-type"/>
</dbReference>
<dbReference type="InterPro" id="IPR003586">
    <property type="entry name" value="Hint_dom_C"/>
</dbReference>
<dbReference type="InterPro" id="IPR003587">
    <property type="entry name" value="Hint_dom_N"/>
</dbReference>
<dbReference type="InterPro" id="IPR036844">
    <property type="entry name" value="Hint_dom_sf"/>
</dbReference>
<dbReference type="InterPro" id="IPR027434">
    <property type="entry name" value="Homing_endonucl"/>
</dbReference>
<dbReference type="InterPro" id="IPR030934">
    <property type="entry name" value="Intein_C"/>
</dbReference>
<dbReference type="InterPro" id="IPR004042">
    <property type="entry name" value="Intein_endonuc_central"/>
</dbReference>
<dbReference type="InterPro" id="IPR006141">
    <property type="entry name" value="Intein_N"/>
</dbReference>
<dbReference type="InterPro" id="IPR027417">
    <property type="entry name" value="P-loop_NTPase"/>
</dbReference>
<dbReference type="InterPro" id="IPR005225">
    <property type="entry name" value="Small_GTP-bd"/>
</dbReference>
<dbReference type="InterPro" id="IPR000795">
    <property type="entry name" value="T_Tr_GTP-bd_dom"/>
</dbReference>
<dbReference type="InterPro" id="IPR004544">
    <property type="entry name" value="TF_aIF-2_arc"/>
</dbReference>
<dbReference type="InterPro" id="IPR015760">
    <property type="entry name" value="TIF_IF2"/>
</dbReference>
<dbReference type="InterPro" id="IPR023115">
    <property type="entry name" value="TIF_IF2_dom3"/>
</dbReference>
<dbReference type="InterPro" id="IPR036925">
    <property type="entry name" value="TIF_IF2_dom3_sf"/>
</dbReference>
<dbReference type="InterPro" id="IPR009000">
    <property type="entry name" value="Transl_B-barrel_sf"/>
</dbReference>
<dbReference type="NCBIfam" id="TIGR00491">
    <property type="entry name" value="aIF-2"/>
    <property type="match status" value="1"/>
</dbReference>
<dbReference type="NCBIfam" id="TIGR01443">
    <property type="entry name" value="intein_Cterm"/>
    <property type="match status" value="1"/>
</dbReference>
<dbReference type="NCBIfam" id="TIGR01445">
    <property type="entry name" value="intein_Nterm"/>
    <property type="match status" value="1"/>
</dbReference>
<dbReference type="NCBIfam" id="NF003078">
    <property type="entry name" value="PRK04004.1"/>
    <property type="match status" value="1"/>
</dbReference>
<dbReference type="NCBIfam" id="NF011418">
    <property type="entry name" value="PRK14845.1"/>
    <property type="match status" value="1"/>
</dbReference>
<dbReference type="NCBIfam" id="TIGR00231">
    <property type="entry name" value="small_GTP"/>
    <property type="match status" value="1"/>
</dbReference>
<dbReference type="PANTHER" id="PTHR43381:SF4">
    <property type="entry name" value="EUKARYOTIC TRANSLATION INITIATION FACTOR 5B"/>
    <property type="match status" value="1"/>
</dbReference>
<dbReference type="PANTHER" id="PTHR43381">
    <property type="entry name" value="TRANSLATION INITIATION FACTOR IF-2-RELATED"/>
    <property type="match status" value="1"/>
</dbReference>
<dbReference type="Pfam" id="PF00009">
    <property type="entry name" value="GTP_EFTU"/>
    <property type="match status" value="1"/>
</dbReference>
<dbReference type="Pfam" id="PF03144">
    <property type="entry name" value="GTP_EFTU_D2"/>
    <property type="match status" value="1"/>
</dbReference>
<dbReference type="Pfam" id="PF14578">
    <property type="entry name" value="GTP_EFTU_D4"/>
    <property type="match status" value="1"/>
</dbReference>
<dbReference type="Pfam" id="PF11987">
    <property type="entry name" value="IF-2"/>
    <property type="match status" value="1"/>
</dbReference>
<dbReference type="Pfam" id="PF14890">
    <property type="entry name" value="Intein_splicing"/>
    <property type="match status" value="1"/>
</dbReference>
<dbReference type="SMART" id="SM00305">
    <property type="entry name" value="HintC"/>
    <property type="match status" value="1"/>
</dbReference>
<dbReference type="SMART" id="SM00306">
    <property type="entry name" value="HintN"/>
    <property type="match status" value="1"/>
</dbReference>
<dbReference type="SUPFAM" id="SSF51294">
    <property type="entry name" value="Hedgehog/intein (Hint) domain"/>
    <property type="match status" value="1"/>
</dbReference>
<dbReference type="SUPFAM" id="SSF52156">
    <property type="entry name" value="Initiation factor IF2/eIF5b, domain 3"/>
    <property type="match status" value="1"/>
</dbReference>
<dbReference type="SUPFAM" id="SSF52540">
    <property type="entry name" value="P-loop containing nucleoside triphosphate hydrolases"/>
    <property type="match status" value="1"/>
</dbReference>
<dbReference type="SUPFAM" id="SSF50447">
    <property type="entry name" value="Translation proteins"/>
    <property type="match status" value="1"/>
</dbReference>
<dbReference type="PROSITE" id="PS51722">
    <property type="entry name" value="G_TR_2"/>
    <property type="match status" value="1"/>
</dbReference>
<dbReference type="PROSITE" id="PS50818">
    <property type="entry name" value="INTEIN_C_TER"/>
    <property type="match status" value="1"/>
</dbReference>
<dbReference type="PROSITE" id="PS50819">
    <property type="entry name" value="INTEIN_ENDONUCLEASE"/>
    <property type="match status" value="1"/>
</dbReference>
<dbReference type="PROSITE" id="PS50817">
    <property type="entry name" value="INTEIN_N_TER"/>
    <property type="match status" value="1"/>
</dbReference>
<keyword id="KW-0002">3D-structure</keyword>
<keyword id="KW-0068">Autocatalytic cleavage</keyword>
<keyword id="KW-0255">Endonuclease</keyword>
<keyword id="KW-0342">GTP-binding</keyword>
<keyword id="KW-0378">Hydrolase</keyword>
<keyword id="KW-0396">Initiation factor</keyword>
<keyword id="KW-0404">Intron homing</keyword>
<keyword id="KW-0540">Nuclease</keyword>
<keyword id="KW-0547">Nucleotide-binding</keyword>
<keyword id="KW-0648">Protein biosynthesis</keyword>
<keyword id="KW-0651">Protein splicing</keyword>
<reference key="1">
    <citation type="journal article" date="2003" name="Mol. Microbiol.">
        <title>An integrated analysis of the genome of the hyperthermophilic archaeon Pyrococcus abyssi.</title>
        <authorList>
            <person name="Cohen G.N."/>
            <person name="Barbe V."/>
            <person name="Flament D."/>
            <person name="Galperin M."/>
            <person name="Heilig R."/>
            <person name="Lecompte O."/>
            <person name="Poch O."/>
            <person name="Prieur D."/>
            <person name="Querellou J."/>
            <person name="Ripp R."/>
            <person name="Thierry J.-C."/>
            <person name="Van der Oost J."/>
            <person name="Weissenbach J."/>
            <person name="Zivanovic Y."/>
            <person name="Forterre P."/>
        </authorList>
    </citation>
    <scope>NUCLEOTIDE SEQUENCE [LARGE SCALE GENOMIC DNA]</scope>
    <source>
        <strain>GE5 / Orsay</strain>
    </source>
</reference>
<reference key="2">
    <citation type="journal article" date="2012" name="Curr. Microbiol.">
        <title>Re-annotation of two hyperthermophilic archaea Pyrococcus abyssi GE5 and Pyrococcus furiosus DSM 3638.</title>
        <authorList>
            <person name="Gao J."/>
            <person name="Wang J."/>
        </authorList>
    </citation>
    <scope>GENOME REANNOTATION</scope>
    <source>
        <strain>GE5 / Orsay</strain>
    </source>
</reference>
<gene>
    <name type="primary">infB</name>
    <name type="ordered locus">PYRAB11390</name>
    <name type="ORF">PAB0755</name>
</gene>
<proteinExistence type="evidence at protein level"/>
<accession>Q9UZK7</accession>
<accession>G8ZKB1</accession>